<organism>
    <name type="scientific">Salmonella newport (strain SL254)</name>
    <dbReference type="NCBI Taxonomy" id="423368"/>
    <lineage>
        <taxon>Bacteria</taxon>
        <taxon>Pseudomonadati</taxon>
        <taxon>Pseudomonadota</taxon>
        <taxon>Gammaproteobacteria</taxon>
        <taxon>Enterobacterales</taxon>
        <taxon>Enterobacteriaceae</taxon>
        <taxon>Salmonella</taxon>
    </lineage>
</organism>
<keyword id="KW-0067">ATP-binding</keyword>
<keyword id="KW-0963">Cytoplasm</keyword>
<keyword id="KW-0227">DNA damage</keyword>
<keyword id="KW-0233">DNA recombination</keyword>
<keyword id="KW-0234">DNA repair</keyword>
<keyword id="KW-0238">DNA-binding</keyword>
<keyword id="KW-0547">Nucleotide-binding</keyword>
<keyword id="KW-0742">SOS response</keyword>
<name>RECA_SALNS</name>
<protein>
    <recommendedName>
        <fullName evidence="1">Protein RecA</fullName>
    </recommendedName>
    <alternativeName>
        <fullName evidence="1">Recombinase A</fullName>
    </alternativeName>
</protein>
<evidence type="ECO:0000255" key="1">
    <source>
        <dbReference type="HAMAP-Rule" id="MF_00268"/>
    </source>
</evidence>
<comment type="function">
    <text evidence="1">Can catalyze the hydrolysis of ATP in the presence of single-stranded DNA, the ATP-dependent uptake of single-stranded DNA by duplex DNA, and the ATP-dependent hybridization of homologous single-stranded DNAs. It interacts with LexA causing its activation and leading to its autocatalytic cleavage.</text>
</comment>
<comment type="subcellular location">
    <subcellularLocation>
        <location evidence="1">Cytoplasm</location>
    </subcellularLocation>
</comment>
<comment type="similarity">
    <text evidence="1">Belongs to the RecA family.</text>
</comment>
<proteinExistence type="inferred from homology"/>
<dbReference type="EMBL" id="CP001113">
    <property type="protein sequence ID" value="ACF65657.1"/>
    <property type="molecule type" value="Genomic_DNA"/>
</dbReference>
<dbReference type="RefSeq" id="WP_000963150.1">
    <property type="nucleotide sequence ID" value="NZ_CCMR01000001.1"/>
</dbReference>
<dbReference type="SMR" id="B4T3A0"/>
<dbReference type="KEGG" id="see:SNSL254_A3031"/>
<dbReference type="HOGENOM" id="CLU_040469_3_2_6"/>
<dbReference type="Proteomes" id="UP000008824">
    <property type="component" value="Chromosome"/>
</dbReference>
<dbReference type="GO" id="GO:0005829">
    <property type="term" value="C:cytosol"/>
    <property type="evidence" value="ECO:0007669"/>
    <property type="project" value="TreeGrafter"/>
</dbReference>
<dbReference type="GO" id="GO:0005524">
    <property type="term" value="F:ATP binding"/>
    <property type="evidence" value="ECO:0007669"/>
    <property type="project" value="UniProtKB-UniRule"/>
</dbReference>
<dbReference type="GO" id="GO:0016887">
    <property type="term" value="F:ATP hydrolysis activity"/>
    <property type="evidence" value="ECO:0007669"/>
    <property type="project" value="InterPro"/>
</dbReference>
<dbReference type="GO" id="GO:0140664">
    <property type="term" value="F:ATP-dependent DNA damage sensor activity"/>
    <property type="evidence" value="ECO:0007669"/>
    <property type="project" value="InterPro"/>
</dbReference>
<dbReference type="GO" id="GO:0003684">
    <property type="term" value="F:damaged DNA binding"/>
    <property type="evidence" value="ECO:0007669"/>
    <property type="project" value="UniProtKB-UniRule"/>
</dbReference>
<dbReference type="GO" id="GO:0003697">
    <property type="term" value="F:single-stranded DNA binding"/>
    <property type="evidence" value="ECO:0007669"/>
    <property type="project" value="UniProtKB-UniRule"/>
</dbReference>
<dbReference type="GO" id="GO:0006310">
    <property type="term" value="P:DNA recombination"/>
    <property type="evidence" value="ECO:0007669"/>
    <property type="project" value="UniProtKB-UniRule"/>
</dbReference>
<dbReference type="GO" id="GO:0006281">
    <property type="term" value="P:DNA repair"/>
    <property type="evidence" value="ECO:0007669"/>
    <property type="project" value="UniProtKB-UniRule"/>
</dbReference>
<dbReference type="GO" id="GO:0009432">
    <property type="term" value="P:SOS response"/>
    <property type="evidence" value="ECO:0007669"/>
    <property type="project" value="UniProtKB-UniRule"/>
</dbReference>
<dbReference type="CDD" id="cd00983">
    <property type="entry name" value="RecA"/>
    <property type="match status" value="1"/>
</dbReference>
<dbReference type="FunFam" id="3.40.50.300:FF:000087">
    <property type="entry name" value="Recombinase RecA"/>
    <property type="match status" value="1"/>
</dbReference>
<dbReference type="Gene3D" id="3.40.50.300">
    <property type="entry name" value="P-loop containing nucleotide triphosphate hydrolases"/>
    <property type="match status" value="1"/>
</dbReference>
<dbReference type="HAMAP" id="MF_00268">
    <property type="entry name" value="RecA"/>
    <property type="match status" value="1"/>
</dbReference>
<dbReference type="InterPro" id="IPR003593">
    <property type="entry name" value="AAA+_ATPase"/>
</dbReference>
<dbReference type="InterPro" id="IPR013765">
    <property type="entry name" value="DNA_recomb/repair_RecA"/>
</dbReference>
<dbReference type="InterPro" id="IPR020584">
    <property type="entry name" value="DNA_recomb/repair_RecA_CS"/>
</dbReference>
<dbReference type="InterPro" id="IPR027417">
    <property type="entry name" value="P-loop_NTPase"/>
</dbReference>
<dbReference type="InterPro" id="IPR049261">
    <property type="entry name" value="RecA-like_C"/>
</dbReference>
<dbReference type="InterPro" id="IPR049428">
    <property type="entry name" value="RecA-like_N"/>
</dbReference>
<dbReference type="InterPro" id="IPR020588">
    <property type="entry name" value="RecA_ATP-bd"/>
</dbReference>
<dbReference type="InterPro" id="IPR023400">
    <property type="entry name" value="RecA_C_sf"/>
</dbReference>
<dbReference type="InterPro" id="IPR020587">
    <property type="entry name" value="RecA_monomer-monomer_interface"/>
</dbReference>
<dbReference type="NCBIfam" id="TIGR02012">
    <property type="entry name" value="tigrfam_recA"/>
    <property type="match status" value="1"/>
</dbReference>
<dbReference type="PANTHER" id="PTHR45900:SF1">
    <property type="entry name" value="MITOCHONDRIAL DNA REPAIR PROTEIN RECA HOMOLOG-RELATED"/>
    <property type="match status" value="1"/>
</dbReference>
<dbReference type="PANTHER" id="PTHR45900">
    <property type="entry name" value="RECA"/>
    <property type="match status" value="1"/>
</dbReference>
<dbReference type="Pfam" id="PF00154">
    <property type="entry name" value="RecA"/>
    <property type="match status" value="1"/>
</dbReference>
<dbReference type="Pfam" id="PF21096">
    <property type="entry name" value="RecA_C"/>
    <property type="match status" value="1"/>
</dbReference>
<dbReference type="PRINTS" id="PR00142">
    <property type="entry name" value="RECA"/>
</dbReference>
<dbReference type="SMART" id="SM00382">
    <property type="entry name" value="AAA"/>
    <property type="match status" value="1"/>
</dbReference>
<dbReference type="SUPFAM" id="SSF52540">
    <property type="entry name" value="P-loop containing nucleoside triphosphate hydrolases"/>
    <property type="match status" value="1"/>
</dbReference>
<dbReference type="SUPFAM" id="SSF54752">
    <property type="entry name" value="RecA protein, C-terminal domain"/>
    <property type="match status" value="1"/>
</dbReference>
<dbReference type="PROSITE" id="PS00321">
    <property type="entry name" value="RECA_1"/>
    <property type="match status" value="1"/>
</dbReference>
<dbReference type="PROSITE" id="PS50162">
    <property type="entry name" value="RECA_2"/>
    <property type="match status" value="1"/>
</dbReference>
<dbReference type="PROSITE" id="PS50163">
    <property type="entry name" value="RECA_3"/>
    <property type="match status" value="1"/>
</dbReference>
<feature type="chain" id="PRO_1000114365" description="Protein RecA">
    <location>
        <begin position="1"/>
        <end position="353"/>
    </location>
</feature>
<feature type="binding site" evidence="1">
    <location>
        <begin position="67"/>
        <end position="74"/>
    </location>
    <ligand>
        <name>ATP</name>
        <dbReference type="ChEBI" id="CHEBI:30616"/>
    </ligand>
</feature>
<reference key="1">
    <citation type="journal article" date="2011" name="J. Bacteriol.">
        <title>Comparative genomics of 28 Salmonella enterica isolates: evidence for CRISPR-mediated adaptive sublineage evolution.</title>
        <authorList>
            <person name="Fricke W.F."/>
            <person name="Mammel M.K."/>
            <person name="McDermott P.F."/>
            <person name="Tartera C."/>
            <person name="White D.G."/>
            <person name="Leclerc J.E."/>
            <person name="Ravel J."/>
            <person name="Cebula T.A."/>
        </authorList>
    </citation>
    <scope>NUCLEOTIDE SEQUENCE [LARGE SCALE GENOMIC DNA]</scope>
    <source>
        <strain>SL254</strain>
    </source>
</reference>
<sequence>MAIDENKQKALAAALGQIEKQFGKGSIMRLGEDRSMDVETISTGSLSLDIALGAGGLPMGRIVEIYGPESSGKTTLTLQVIAAAQREGKTCAFIDAEHALDPVYARKLGVDIDNLLCSQPDTGEQALEICDALARSGAVDVIVVDSVAALTPKAEIEGEIGDSHMGLAARMMSQAMRKLAGNLKQSNTLLIFINQIRMKIGVMFGNPETTTGGNALKFYASVRLDIRRIGAVKEGDNVVGSETRVKVVKNKIAAPFKQAEFQILYGEGINFYGELVDLGVKEKLIEKAGAWYSYNGEKIGQGKANATTWLKENPATAKEIEKRVRELLLSNQNATPDFAVDDSEGVAETNEDF</sequence>
<gene>
    <name evidence="1" type="primary">recA</name>
    <name type="ordered locus">SNSL254_A3031</name>
</gene>
<accession>B4T3A0</accession>